<name>Y030_RICPR</name>
<reference key="1">
    <citation type="journal article" date="1998" name="Nature">
        <title>The genome sequence of Rickettsia prowazekii and the origin of mitochondria.</title>
        <authorList>
            <person name="Andersson S.G.E."/>
            <person name="Zomorodipour A."/>
            <person name="Andersson J.O."/>
            <person name="Sicheritz-Ponten T."/>
            <person name="Alsmark U.C.M."/>
            <person name="Podowski R.M."/>
            <person name="Naeslund A.K."/>
            <person name="Eriksson A.-S."/>
            <person name="Winkler H.H."/>
            <person name="Kurland C.G."/>
        </authorList>
    </citation>
    <scope>NUCLEOTIDE SEQUENCE [LARGE SCALE GENOMIC DNA]</scope>
    <source>
        <strain>Madrid E</strain>
    </source>
</reference>
<dbReference type="EMBL" id="AJ235270">
    <property type="protein sequence ID" value="CAA14501.1"/>
    <property type="molecule type" value="Genomic_DNA"/>
</dbReference>
<dbReference type="PIR" id="F71710">
    <property type="entry name" value="F71710"/>
</dbReference>
<dbReference type="RefSeq" id="NP_220424.1">
    <property type="nucleotide sequence ID" value="NC_000963.1"/>
</dbReference>
<dbReference type="RefSeq" id="WP_004596659.1">
    <property type="nucleotide sequence ID" value="NC_000963.1"/>
</dbReference>
<dbReference type="SMR" id="Q9ZEB5"/>
<dbReference type="STRING" id="272947.gene:17555113"/>
<dbReference type="EnsemblBacteria" id="CAA14501">
    <property type="protein sequence ID" value="CAA14501"/>
    <property type="gene ID" value="CAA14501"/>
</dbReference>
<dbReference type="KEGG" id="rpr:RP030"/>
<dbReference type="PATRIC" id="fig|272947.5.peg.31"/>
<dbReference type="eggNOG" id="ENOG5031BBN">
    <property type="taxonomic scope" value="Bacteria"/>
</dbReference>
<dbReference type="HOGENOM" id="CLU_1244545_0_0_5"/>
<dbReference type="OrthoDB" id="7160522at2"/>
<dbReference type="Proteomes" id="UP000002480">
    <property type="component" value="Chromosome"/>
</dbReference>
<dbReference type="InterPro" id="IPR020171">
    <property type="entry name" value="Uncharacterised_RC0039"/>
</dbReference>
<dbReference type="Pfam" id="PF17372">
    <property type="entry name" value="DUF5394"/>
    <property type="match status" value="1"/>
</dbReference>
<sequence>MTNNQFSEDTKKIADQIKDSLIGISDNLVLESKEVEEIFEELSKNEEFDYEIERILAILNEQTMDLTQLQSRIILLIRKYLDKTKNLKLKMDEKLINKNVAEVSNYLMHQHSKIVRDANKNLAKPKDKLQSLTKQARMDLKRLIKSFAVYQVYMFMNPKRIAGETKLMNFAYNMIKGGMKLAKKYEGGKEKDIKSYSPRLIKKLEKAHAGFKKNNSISI</sequence>
<accession>Q9ZEB5</accession>
<proteinExistence type="predicted"/>
<protein>
    <recommendedName>
        <fullName>Uncharacterized protein RP030</fullName>
    </recommendedName>
</protein>
<feature type="chain" id="PRO_0000101302" description="Uncharacterized protein RP030">
    <location>
        <begin position="1"/>
        <end position="219"/>
    </location>
</feature>
<gene>
    <name type="ordered locus">RP030</name>
</gene>
<keyword id="KW-1185">Reference proteome</keyword>
<organism>
    <name type="scientific">Rickettsia prowazekii (strain Madrid E)</name>
    <dbReference type="NCBI Taxonomy" id="272947"/>
    <lineage>
        <taxon>Bacteria</taxon>
        <taxon>Pseudomonadati</taxon>
        <taxon>Pseudomonadota</taxon>
        <taxon>Alphaproteobacteria</taxon>
        <taxon>Rickettsiales</taxon>
        <taxon>Rickettsiaceae</taxon>
        <taxon>Rickettsieae</taxon>
        <taxon>Rickettsia</taxon>
        <taxon>typhus group</taxon>
    </lineage>
</organism>